<organism>
    <name type="scientific">Burkholderia mallei (strain SAVP1)</name>
    <dbReference type="NCBI Taxonomy" id="320388"/>
    <lineage>
        <taxon>Bacteria</taxon>
        <taxon>Pseudomonadati</taxon>
        <taxon>Pseudomonadota</taxon>
        <taxon>Betaproteobacteria</taxon>
        <taxon>Burkholderiales</taxon>
        <taxon>Burkholderiaceae</taxon>
        <taxon>Burkholderia</taxon>
        <taxon>pseudomallei group</taxon>
    </lineage>
</organism>
<reference key="1">
    <citation type="journal article" date="2010" name="Genome Biol. Evol.">
        <title>Continuing evolution of Burkholderia mallei through genome reduction and large-scale rearrangements.</title>
        <authorList>
            <person name="Losada L."/>
            <person name="Ronning C.M."/>
            <person name="DeShazer D."/>
            <person name="Woods D."/>
            <person name="Fedorova N."/>
            <person name="Kim H.S."/>
            <person name="Shabalina S.A."/>
            <person name="Pearson T.R."/>
            <person name="Brinkac L."/>
            <person name="Tan P."/>
            <person name="Nandi T."/>
            <person name="Crabtree J."/>
            <person name="Badger J."/>
            <person name="Beckstrom-Sternberg S."/>
            <person name="Saqib M."/>
            <person name="Schutzer S.E."/>
            <person name="Keim P."/>
            <person name="Nierman W.C."/>
        </authorList>
    </citation>
    <scope>NUCLEOTIDE SEQUENCE [LARGE SCALE GENOMIC DNA]</scope>
    <source>
        <strain>SAVP1</strain>
    </source>
</reference>
<sequence>MDWILICKALALGIVEGLTEFLPVSSTGHLIVAGSFLRFHPEQAKTFDVVIQFGAILAVCWEYRRRIIDVVTGLPAQREARRFTMNVVIATVPAVALALLFEKTIKSVLFAPVPVAVALVVGGAAILWVEGRQRERSEPARVQSIDALTPFDALKVGLAQCCALIPGMSRSGSTIIGGMLFGLERRVATEFSFFLAIPVIFGATLYETAKDWRAFNVDSVGLFAIGLVAAFVSAFACVRWLLRYVASHDFTAFAWYRIAFGLFVLLVGYSGWIEWT</sequence>
<proteinExistence type="inferred from homology"/>
<evidence type="ECO:0000255" key="1">
    <source>
        <dbReference type="HAMAP-Rule" id="MF_01006"/>
    </source>
</evidence>
<name>UPPP_BURMS</name>
<comment type="function">
    <text evidence="1">Catalyzes the dephosphorylation of undecaprenyl diphosphate (UPP). Confers resistance to bacitracin.</text>
</comment>
<comment type="catalytic activity">
    <reaction evidence="1">
        <text>di-trans,octa-cis-undecaprenyl diphosphate + H2O = di-trans,octa-cis-undecaprenyl phosphate + phosphate + H(+)</text>
        <dbReference type="Rhea" id="RHEA:28094"/>
        <dbReference type="ChEBI" id="CHEBI:15377"/>
        <dbReference type="ChEBI" id="CHEBI:15378"/>
        <dbReference type="ChEBI" id="CHEBI:43474"/>
        <dbReference type="ChEBI" id="CHEBI:58405"/>
        <dbReference type="ChEBI" id="CHEBI:60392"/>
        <dbReference type="EC" id="3.6.1.27"/>
    </reaction>
</comment>
<comment type="subcellular location">
    <subcellularLocation>
        <location evidence="1">Cell inner membrane</location>
        <topology evidence="1">Multi-pass membrane protein</topology>
    </subcellularLocation>
</comment>
<comment type="miscellaneous">
    <text>Bacitracin is thought to be involved in the inhibition of peptidoglycan synthesis by sequestering undecaprenyl diphosphate, thereby reducing the pool of lipid carrier available.</text>
</comment>
<comment type="similarity">
    <text evidence="1">Belongs to the UppP family.</text>
</comment>
<gene>
    <name evidence="1" type="primary">uppP</name>
    <name type="ordered locus">BMASAVP1_A0742</name>
</gene>
<protein>
    <recommendedName>
        <fullName evidence="1">Undecaprenyl-diphosphatase</fullName>
        <ecNumber evidence="1">3.6.1.27</ecNumber>
    </recommendedName>
    <alternativeName>
        <fullName evidence="1">Bacitracin resistance protein</fullName>
    </alternativeName>
    <alternativeName>
        <fullName evidence="1">Undecaprenyl pyrophosphate phosphatase</fullName>
    </alternativeName>
</protein>
<feature type="chain" id="PRO_1000062790" description="Undecaprenyl-diphosphatase">
    <location>
        <begin position="1"/>
        <end position="276"/>
    </location>
</feature>
<feature type="transmembrane region" description="Helical" evidence="1">
    <location>
        <begin position="85"/>
        <end position="105"/>
    </location>
</feature>
<feature type="transmembrane region" description="Helical" evidence="1">
    <location>
        <begin position="108"/>
        <end position="128"/>
    </location>
</feature>
<feature type="transmembrane region" description="Helical" evidence="1">
    <location>
        <begin position="187"/>
        <end position="207"/>
    </location>
</feature>
<feature type="transmembrane region" description="Helical" evidence="1">
    <location>
        <begin position="217"/>
        <end position="237"/>
    </location>
</feature>
<feature type="transmembrane region" description="Helical" evidence="1">
    <location>
        <begin position="253"/>
        <end position="273"/>
    </location>
</feature>
<dbReference type="EC" id="3.6.1.27" evidence="1"/>
<dbReference type="EMBL" id="CP000526">
    <property type="protein sequence ID" value="ABM49963.1"/>
    <property type="molecule type" value="Genomic_DNA"/>
</dbReference>
<dbReference type="RefSeq" id="WP_004185904.1">
    <property type="nucleotide sequence ID" value="NC_008785.1"/>
</dbReference>
<dbReference type="SMR" id="A1V1I5"/>
<dbReference type="KEGG" id="bmv:BMASAVP1_A0742"/>
<dbReference type="HOGENOM" id="CLU_060296_2_0_4"/>
<dbReference type="GO" id="GO:0005886">
    <property type="term" value="C:plasma membrane"/>
    <property type="evidence" value="ECO:0007669"/>
    <property type="project" value="UniProtKB-SubCell"/>
</dbReference>
<dbReference type="GO" id="GO:0050380">
    <property type="term" value="F:undecaprenyl-diphosphatase activity"/>
    <property type="evidence" value="ECO:0007669"/>
    <property type="project" value="UniProtKB-UniRule"/>
</dbReference>
<dbReference type="GO" id="GO:0071555">
    <property type="term" value="P:cell wall organization"/>
    <property type="evidence" value="ECO:0007669"/>
    <property type="project" value="UniProtKB-KW"/>
</dbReference>
<dbReference type="GO" id="GO:0009252">
    <property type="term" value="P:peptidoglycan biosynthetic process"/>
    <property type="evidence" value="ECO:0007669"/>
    <property type="project" value="UniProtKB-KW"/>
</dbReference>
<dbReference type="GO" id="GO:0008360">
    <property type="term" value="P:regulation of cell shape"/>
    <property type="evidence" value="ECO:0007669"/>
    <property type="project" value="UniProtKB-KW"/>
</dbReference>
<dbReference type="GO" id="GO:0046677">
    <property type="term" value="P:response to antibiotic"/>
    <property type="evidence" value="ECO:0007669"/>
    <property type="project" value="UniProtKB-UniRule"/>
</dbReference>
<dbReference type="HAMAP" id="MF_01006">
    <property type="entry name" value="Undec_diphosphatase"/>
    <property type="match status" value="1"/>
</dbReference>
<dbReference type="InterPro" id="IPR003824">
    <property type="entry name" value="UppP"/>
</dbReference>
<dbReference type="NCBIfam" id="NF001389">
    <property type="entry name" value="PRK00281.1-2"/>
    <property type="match status" value="1"/>
</dbReference>
<dbReference type="NCBIfam" id="NF001390">
    <property type="entry name" value="PRK00281.1-4"/>
    <property type="match status" value="1"/>
</dbReference>
<dbReference type="NCBIfam" id="TIGR00753">
    <property type="entry name" value="undec_PP_bacA"/>
    <property type="match status" value="1"/>
</dbReference>
<dbReference type="PANTHER" id="PTHR30622">
    <property type="entry name" value="UNDECAPRENYL-DIPHOSPHATASE"/>
    <property type="match status" value="1"/>
</dbReference>
<dbReference type="PANTHER" id="PTHR30622:SF3">
    <property type="entry name" value="UNDECAPRENYL-DIPHOSPHATASE"/>
    <property type="match status" value="1"/>
</dbReference>
<dbReference type="Pfam" id="PF02673">
    <property type="entry name" value="BacA"/>
    <property type="match status" value="1"/>
</dbReference>
<keyword id="KW-0046">Antibiotic resistance</keyword>
<keyword id="KW-0997">Cell inner membrane</keyword>
<keyword id="KW-1003">Cell membrane</keyword>
<keyword id="KW-0133">Cell shape</keyword>
<keyword id="KW-0961">Cell wall biogenesis/degradation</keyword>
<keyword id="KW-0378">Hydrolase</keyword>
<keyword id="KW-0472">Membrane</keyword>
<keyword id="KW-0573">Peptidoglycan synthesis</keyword>
<keyword id="KW-0812">Transmembrane</keyword>
<keyword id="KW-1133">Transmembrane helix</keyword>
<accession>A1V1I5</accession>